<keyword id="KW-0028">Amino-acid biosynthesis</keyword>
<keyword id="KW-0032">Aminotransferase</keyword>
<keyword id="KW-0963">Cytoplasm</keyword>
<keyword id="KW-0663">Pyridoxal phosphate</keyword>
<keyword id="KW-1185">Reference proteome</keyword>
<keyword id="KW-0808">Transferase</keyword>
<accession>Q795M6</accession>
<accession>O05237</accession>
<sequence length="386" mass="42310">MTSYLSDYVQQIKPSGIRKFFDLAATMEGVISLGVGEPDFVTAWNVREASILSLEQGYTSYTANAGLYSLREEISRYLSNRFDLSYSPDNELIVTVGASQALDIAIRAIVNPGEEVIIPEPCFVAYDALVSLAGGIPVHVHTTADKGFKATAADFEAAVTEKTKAILICSPSNPTGSVYSKEELNEIAEFAKKHDVIVLADEIYAELTYDEEFTSIAALPGMKERTVVISGFSKAFAMTGWRLGFAAAPSLLRDAMLKIHQYAMMCAPAMAQFAALEGLKNGMEDVEKMKKSYRRRRNLFVESLNEIGLSCHHPGGAFYAFPSIKSMGMSSEQFAEELLTQEKVAVVPGSVFGPSGEGYIRCSYATSIEQLQEALVRMKRFLHKTT</sequence>
<dbReference type="EC" id="2.6.1.-"/>
<dbReference type="EMBL" id="Z93934">
    <property type="protein sequence ID" value="CAB07920.1"/>
    <property type="molecule type" value="Genomic_DNA"/>
</dbReference>
<dbReference type="EMBL" id="AL009126">
    <property type="protein sequence ID" value="CAB15129.2"/>
    <property type="molecule type" value="Genomic_DNA"/>
</dbReference>
<dbReference type="PIR" id="G70010">
    <property type="entry name" value="G70010"/>
</dbReference>
<dbReference type="RefSeq" id="NP_391018.2">
    <property type="nucleotide sequence ID" value="NC_000964.3"/>
</dbReference>
<dbReference type="RefSeq" id="WP_009968069.1">
    <property type="nucleotide sequence ID" value="NZ_OZ025638.1"/>
</dbReference>
<dbReference type="SMR" id="Q795M6"/>
<dbReference type="FunCoup" id="Q795M6">
    <property type="interactions" value="485"/>
</dbReference>
<dbReference type="STRING" id="224308.BSU31400"/>
<dbReference type="jPOST" id="Q795M6"/>
<dbReference type="PaxDb" id="224308-BSU31400"/>
<dbReference type="EnsemblBacteria" id="CAB15129">
    <property type="protein sequence ID" value="CAB15129"/>
    <property type="gene ID" value="BSU_31400"/>
</dbReference>
<dbReference type="GeneID" id="938846"/>
<dbReference type="KEGG" id="bsu:BSU31400"/>
<dbReference type="PATRIC" id="fig|224308.179.peg.3404"/>
<dbReference type="eggNOG" id="COG0436">
    <property type="taxonomic scope" value="Bacteria"/>
</dbReference>
<dbReference type="InParanoid" id="Q795M6"/>
<dbReference type="OrthoDB" id="9802328at2"/>
<dbReference type="PhylomeDB" id="Q795M6"/>
<dbReference type="BioCyc" id="BSUB:BSU31400-MONOMER"/>
<dbReference type="Proteomes" id="UP000001570">
    <property type="component" value="Chromosome"/>
</dbReference>
<dbReference type="GO" id="GO:0005737">
    <property type="term" value="C:cytoplasm"/>
    <property type="evidence" value="ECO:0007669"/>
    <property type="project" value="UniProtKB-SubCell"/>
</dbReference>
<dbReference type="GO" id="GO:0030170">
    <property type="term" value="F:pyridoxal phosphate binding"/>
    <property type="evidence" value="ECO:0007669"/>
    <property type="project" value="InterPro"/>
</dbReference>
<dbReference type="GO" id="GO:0008483">
    <property type="term" value="F:transaminase activity"/>
    <property type="evidence" value="ECO:0000318"/>
    <property type="project" value="GO_Central"/>
</dbReference>
<dbReference type="GO" id="GO:0008652">
    <property type="term" value="P:amino acid biosynthetic process"/>
    <property type="evidence" value="ECO:0007669"/>
    <property type="project" value="UniProtKB-KW"/>
</dbReference>
<dbReference type="GO" id="GO:0006520">
    <property type="term" value="P:amino acid metabolic process"/>
    <property type="evidence" value="ECO:0000318"/>
    <property type="project" value="GO_Central"/>
</dbReference>
<dbReference type="CDD" id="cd00609">
    <property type="entry name" value="AAT_like"/>
    <property type="match status" value="1"/>
</dbReference>
<dbReference type="FunFam" id="3.40.640.10:FF:000033">
    <property type="entry name" value="Aspartate aminotransferase"/>
    <property type="match status" value="1"/>
</dbReference>
<dbReference type="Gene3D" id="3.90.1150.10">
    <property type="entry name" value="Aspartate Aminotransferase, domain 1"/>
    <property type="match status" value="1"/>
</dbReference>
<dbReference type="Gene3D" id="3.40.640.10">
    <property type="entry name" value="Type I PLP-dependent aspartate aminotransferase-like (Major domain)"/>
    <property type="match status" value="1"/>
</dbReference>
<dbReference type="InterPro" id="IPR004839">
    <property type="entry name" value="Aminotransferase_I/II_large"/>
</dbReference>
<dbReference type="InterPro" id="IPR050596">
    <property type="entry name" value="AspAT/PAT-like"/>
</dbReference>
<dbReference type="InterPro" id="IPR004838">
    <property type="entry name" value="NHTrfase_class1_PyrdxlP-BS"/>
</dbReference>
<dbReference type="InterPro" id="IPR015424">
    <property type="entry name" value="PyrdxlP-dep_Trfase"/>
</dbReference>
<dbReference type="InterPro" id="IPR015421">
    <property type="entry name" value="PyrdxlP-dep_Trfase_major"/>
</dbReference>
<dbReference type="InterPro" id="IPR015422">
    <property type="entry name" value="PyrdxlP-dep_Trfase_small"/>
</dbReference>
<dbReference type="NCBIfam" id="NF005816">
    <property type="entry name" value="PRK07682.1"/>
    <property type="match status" value="1"/>
</dbReference>
<dbReference type="PANTHER" id="PTHR46383">
    <property type="entry name" value="ASPARTATE AMINOTRANSFERASE"/>
    <property type="match status" value="1"/>
</dbReference>
<dbReference type="PANTHER" id="PTHR46383:SF3">
    <property type="entry name" value="ASPARTATE AMINOTRANSFERASE-RELATED"/>
    <property type="match status" value="1"/>
</dbReference>
<dbReference type="Pfam" id="PF00155">
    <property type="entry name" value="Aminotran_1_2"/>
    <property type="match status" value="1"/>
</dbReference>
<dbReference type="SUPFAM" id="SSF53383">
    <property type="entry name" value="PLP-dependent transferases"/>
    <property type="match status" value="1"/>
</dbReference>
<dbReference type="PROSITE" id="PS00105">
    <property type="entry name" value="AA_TRANSFER_CLASS_1"/>
    <property type="match status" value="1"/>
</dbReference>
<proteinExistence type="inferred from homology"/>
<protein>
    <recommendedName>
        <fullName>Putative aminotransferase YugH</fullName>
        <ecNumber>2.6.1.-</ecNumber>
    </recommendedName>
</protein>
<comment type="cofactor">
    <cofactor evidence="3">
        <name>pyridoxal 5'-phosphate</name>
        <dbReference type="ChEBI" id="CHEBI:597326"/>
    </cofactor>
</comment>
<comment type="subcellular location">
    <subcellularLocation>
        <location evidence="1">Cytoplasm</location>
    </subcellularLocation>
</comment>
<comment type="similarity">
    <text evidence="3">Belongs to the class-I pyridoxal-phosphate-dependent aminotransferase family.</text>
</comment>
<gene>
    <name type="primary">yugH</name>
    <name type="synonym">alaT</name>
    <name type="ordered locus">BSU31400</name>
</gene>
<organism>
    <name type="scientific">Bacillus subtilis (strain 168)</name>
    <dbReference type="NCBI Taxonomy" id="224308"/>
    <lineage>
        <taxon>Bacteria</taxon>
        <taxon>Bacillati</taxon>
        <taxon>Bacillota</taxon>
        <taxon>Bacilli</taxon>
        <taxon>Bacillales</taxon>
        <taxon>Bacillaceae</taxon>
        <taxon>Bacillus</taxon>
    </lineage>
</organism>
<name>YUGH_BACSU</name>
<evidence type="ECO:0000250" key="1"/>
<evidence type="ECO:0000255" key="2"/>
<evidence type="ECO:0000305" key="3"/>
<reference key="1">
    <citation type="journal article" date="1997" name="Microbiology">
        <title>Analysis of the Bacillus subtilis genome: cloning and nucleotide sequence of a 62 kb region between 275 degrees (rrnB) and 284 degrees (pai).</title>
        <authorList>
            <person name="Oudega B."/>
            <person name="Koningstein G."/>
            <person name="Rodrigues L."/>
            <person name="de Sales Ramon M."/>
            <person name="Hilbert H."/>
            <person name="Duesterhoeft A."/>
            <person name="Pohl T.M."/>
            <person name="Weitzenegger T."/>
        </authorList>
    </citation>
    <scope>NUCLEOTIDE SEQUENCE [GENOMIC DNA]</scope>
    <source>
        <strain>168</strain>
    </source>
</reference>
<reference key="2">
    <citation type="journal article" date="1997" name="Nature">
        <title>The complete genome sequence of the Gram-positive bacterium Bacillus subtilis.</title>
        <authorList>
            <person name="Kunst F."/>
            <person name="Ogasawara N."/>
            <person name="Moszer I."/>
            <person name="Albertini A.M."/>
            <person name="Alloni G."/>
            <person name="Azevedo V."/>
            <person name="Bertero M.G."/>
            <person name="Bessieres P."/>
            <person name="Bolotin A."/>
            <person name="Borchert S."/>
            <person name="Borriss R."/>
            <person name="Boursier L."/>
            <person name="Brans A."/>
            <person name="Braun M."/>
            <person name="Brignell S.C."/>
            <person name="Bron S."/>
            <person name="Brouillet S."/>
            <person name="Bruschi C.V."/>
            <person name="Caldwell B."/>
            <person name="Capuano V."/>
            <person name="Carter N.M."/>
            <person name="Choi S.-K."/>
            <person name="Codani J.-J."/>
            <person name="Connerton I.F."/>
            <person name="Cummings N.J."/>
            <person name="Daniel R.A."/>
            <person name="Denizot F."/>
            <person name="Devine K.M."/>
            <person name="Duesterhoeft A."/>
            <person name="Ehrlich S.D."/>
            <person name="Emmerson P.T."/>
            <person name="Entian K.-D."/>
            <person name="Errington J."/>
            <person name="Fabret C."/>
            <person name="Ferrari E."/>
            <person name="Foulger D."/>
            <person name="Fritz C."/>
            <person name="Fujita M."/>
            <person name="Fujita Y."/>
            <person name="Fuma S."/>
            <person name="Galizzi A."/>
            <person name="Galleron N."/>
            <person name="Ghim S.-Y."/>
            <person name="Glaser P."/>
            <person name="Goffeau A."/>
            <person name="Golightly E.J."/>
            <person name="Grandi G."/>
            <person name="Guiseppi G."/>
            <person name="Guy B.J."/>
            <person name="Haga K."/>
            <person name="Haiech J."/>
            <person name="Harwood C.R."/>
            <person name="Henaut A."/>
            <person name="Hilbert H."/>
            <person name="Holsappel S."/>
            <person name="Hosono S."/>
            <person name="Hullo M.-F."/>
            <person name="Itaya M."/>
            <person name="Jones L.-M."/>
            <person name="Joris B."/>
            <person name="Karamata D."/>
            <person name="Kasahara Y."/>
            <person name="Klaerr-Blanchard M."/>
            <person name="Klein C."/>
            <person name="Kobayashi Y."/>
            <person name="Koetter P."/>
            <person name="Koningstein G."/>
            <person name="Krogh S."/>
            <person name="Kumano M."/>
            <person name="Kurita K."/>
            <person name="Lapidus A."/>
            <person name="Lardinois S."/>
            <person name="Lauber J."/>
            <person name="Lazarevic V."/>
            <person name="Lee S.-M."/>
            <person name="Levine A."/>
            <person name="Liu H."/>
            <person name="Masuda S."/>
            <person name="Mauel C."/>
            <person name="Medigue C."/>
            <person name="Medina N."/>
            <person name="Mellado R.P."/>
            <person name="Mizuno M."/>
            <person name="Moestl D."/>
            <person name="Nakai S."/>
            <person name="Noback M."/>
            <person name="Noone D."/>
            <person name="O'Reilly M."/>
            <person name="Ogawa K."/>
            <person name="Ogiwara A."/>
            <person name="Oudega B."/>
            <person name="Park S.-H."/>
            <person name="Parro V."/>
            <person name="Pohl T.M."/>
            <person name="Portetelle D."/>
            <person name="Porwollik S."/>
            <person name="Prescott A.M."/>
            <person name="Presecan E."/>
            <person name="Pujic P."/>
            <person name="Purnelle B."/>
            <person name="Rapoport G."/>
            <person name="Rey M."/>
            <person name="Reynolds S."/>
            <person name="Rieger M."/>
            <person name="Rivolta C."/>
            <person name="Rocha E."/>
            <person name="Roche B."/>
            <person name="Rose M."/>
            <person name="Sadaie Y."/>
            <person name="Sato T."/>
            <person name="Scanlan E."/>
            <person name="Schleich S."/>
            <person name="Schroeter R."/>
            <person name="Scoffone F."/>
            <person name="Sekiguchi J."/>
            <person name="Sekowska A."/>
            <person name="Seror S.J."/>
            <person name="Serror P."/>
            <person name="Shin B.-S."/>
            <person name="Soldo B."/>
            <person name="Sorokin A."/>
            <person name="Tacconi E."/>
            <person name="Takagi T."/>
            <person name="Takahashi H."/>
            <person name="Takemaru K."/>
            <person name="Takeuchi M."/>
            <person name="Tamakoshi A."/>
            <person name="Tanaka T."/>
            <person name="Terpstra P."/>
            <person name="Tognoni A."/>
            <person name="Tosato V."/>
            <person name="Uchiyama S."/>
            <person name="Vandenbol M."/>
            <person name="Vannier F."/>
            <person name="Vassarotti A."/>
            <person name="Viari A."/>
            <person name="Wambutt R."/>
            <person name="Wedler E."/>
            <person name="Wedler H."/>
            <person name="Weitzenegger T."/>
            <person name="Winters P."/>
            <person name="Wipat A."/>
            <person name="Yamamoto H."/>
            <person name="Yamane K."/>
            <person name="Yasumoto K."/>
            <person name="Yata K."/>
            <person name="Yoshida K."/>
            <person name="Yoshikawa H.-F."/>
            <person name="Zumstein E."/>
            <person name="Yoshikawa H."/>
            <person name="Danchin A."/>
        </authorList>
    </citation>
    <scope>NUCLEOTIDE SEQUENCE [LARGE SCALE GENOMIC DNA]</scope>
    <source>
        <strain>168</strain>
    </source>
</reference>
<reference key="3">
    <citation type="journal article" date="2009" name="Microbiology">
        <title>From a consortium sequence to a unified sequence: the Bacillus subtilis 168 reference genome a decade later.</title>
        <authorList>
            <person name="Barbe V."/>
            <person name="Cruveiller S."/>
            <person name="Kunst F."/>
            <person name="Lenoble P."/>
            <person name="Meurice G."/>
            <person name="Sekowska A."/>
            <person name="Vallenet D."/>
            <person name="Wang T."/>
            <person name="Moszer I."/>
            <person name="Medigue C."/>
            <person name="Danchin A."/>
        </authorList>
    </citation>
    <scope>SEQUENCE REVISION TO 317-335</scope>
    <scope>C-TERMINUS</scope>
</reference>
<feature type="chain" id="PRO_0000388351" description="Putative aminotransferase YugH">
    <location>
        <begin position="1"/>
        <end position="386"/>
    </location>
</feature>
<feature type="modified residue" description="N6-(pyridoxal phosphate)lysine" evidence="2">
    <location>
        <position position="234"/>
    </location>
</feature>
<feature type="sequence conflict" description="In Ref. 1; CAB07920." evidence="3" ref="1">
    <original>AFYAFPSIKSMGMSSEQFA</original>
    <variation>RFLCFSIYQKHGNEFKNSLP</variation>
    <location>
        <begin position="317"/>
        <end position="335"/>
    </location>
</feature>
<feature type="sequence conflict" description="In Ref. 1; CAB07920." evidence="3" ref="1">
    <original>PGSVFGPSGEGYIRCSYATS</original>
    <variation>SWKCVWSER</variation>
    <location>
        <begin position="348"/>
        <end position="367"/>
    </location>
</feature>